<gene>
    <name evidence="1" type="primary">coaX</name>
    <name type="ordered locus">Rcas_1296</name>
</gene>
<sequence length="255" mass="27502">MLLTIDIGNTNIKIGAYQGERLTAHWRVTTERHRLADEYLVLLHNLFDLGGIDPRHIDGCAISCVVPPLTGEFRALCHKYFRVDPLMVNASTPTGLQYKVDAPAELGADRIANSLAAFRRYGGPVIVLAFGTATTFDVITATGEYIGGAIAPGIGISADALFRLAAKLYQVELVRPPKVIGTNTIHHMQSGVILGYAGLVEGLVRRMQAELGTSCPVVATGGLAELIAAETEAITTVEPYLTLDGLRLIYEMNRQ</sequence>
<protein>
    <recommendedName>
        <fullName evidence="1">Type III pantothenate kinase</fullName>
        <ecNumber evidence="1">2.7.1.33</ecNumber>
    </recommendedName>
    <alternativeName>
        <fullName evidence="1">PanK-III</fullName>
    </alternativeName>
    <alternativeName>
        <fullName evidence="1">Pantothenic acid kinase</fullName>
    </alternativeName>
</protein>
<accession>A7NF27</accession>
<reference key="1">
    <citation type="submission" date="2007-08" db="EMBL/GenBank/DDBJ databases">
        <title>Complete sequence of Roseiflexus castenholzii DSM 13941.</title>
        <authorList>
            <consortium name="US DOE Joint Genome Institute"/>
            <person name="Copeland A."/>
            <person name="Lucas S."/>
            <person name="Lapidus A."/>
            <person name="Barry K."/>
            <person name="Glavina del Rio T."/>
            <person name="Dalin E."/>
            <person name="Tice H."/>
            <person name="Pitluck S."/>
            <person name="Thompson L.S."/>
            <person name="Brettin T."/>
            <person name="Bruce D."/>
            <person name="Detter J.C."/>
            <person name="Han C."/>
            <person name="Tapia R."/>
            <person name="Schmutz J."/>
            <person name="Larimer F."/>
            <person name="Land M."/>
            <person name="Hauser L."/>
            <person name="Kyrpides N."/>
            <person name="Mikhailova N."/>
            <person name="Bryant D.A."/>
            <person name="Hanada S."/>
            <person name="Tsukatani Y."/>
            <person name="Richardson P."/>
        </authorList>
    </citation>
    <scope>NUCLEOTIDE SEQUENCE [LARGE SCALE GENOMIC DNA]</scope>
    <source>
        <strain>DSM 13941 / HLO8</strain>
    </source>
</reference>
<proteinExistence type="inferred from homology"/>
<comment type="function">
    <text evidence="1">Catalyzes the phosphorylation of pantothenate (Pan), the first step in CoA biosynthesis.</text>
</comment>
<comment type="catalytic activity">
    <reaction evidence="1">
        <text>(R)-pantothenate + ATP = (R)-4'-phosphopantothenate + ADP + H(+)</text>
        <dbReference type="Rhea" id="RHEA:16373"/>
        <dbReference type="ChEBI" id="CHEBI:10986"/>
        <dbReference type="ChEBI" id="CHEBI:15378"/>
        <dbReference type="ChEBI" id="CHEBI:29032"/>
        <dbReference type="ChEBI" id="CHEBI:30616"/>
        <dbReference type="ChEBI" id="CHEBI:456216"/>
        <dbReference type="EC" id="2.7.1.33"/>
    </reaction>
</comment>
<comment type="cofactor">
    <cofactor evidence="1">
        <name>NH4(+)</name>
        <dbReference type="ChEBI" id="CHEBI:28938"/>
    </cofactor>
    <cofactor evidence="1">
        <name>K(+)</name>
        <dbReference type="ChEBI" id="CHEBI:29103"/>
    </cofactor>
    <text evidence="1">A monovalent cation. Ammonium or potassium.</text>
</comment>
<comment type="pathway">
    <text evidence="1">Cofactor biosynthesis; coenzyme A biosynthesis; CoA from (R)-pantothenate: step 1/5.</text>
</comment>
<comment type="subunit">
    <text evidence="1">Homodimer.</text>
</comment>
<comment type="subcellular location">
    <subcellularLocation>
        <location evidence="1">Cytoplasm</location>
    </subcellularLocation>
</comment>
<comment type="similarity">
    <text evidence="1">Belongs to the type III pantothenate kinase family.</text>
</comment>
<organism>
    <name type="scientific">Roseiflexus castenholzii (strain DSM 13941 / HLO8)</name>
    <dbReference type="NCBI Taxonomy" id="383372"/>
    <lineage>
        <taxon>Bacteria</taxon>
        <taxon>Bacillati</taxon>
        <taxon>Chloroflexota</taxon>
        <taxon>Chloroflexia</taxon>
        <taxon>Chloroflexales</taxon>
        <taxon>Roseiflexineae</taxon>
        <taxon>Roseiflexaceae</taxon>
        <taxon>Roseiflexus</taxon>
    </lineage>
</organism>
<keyword id="KW-0067">ATP-binding</keyword>
<keyword id="KW-0173">Coenzyme A biosynthesis</keyword>
<keyword id="KW-0963">Cytoplasm</keyword>
<keyword id="KW-0418">Kinase</keyword>
<keyword id="KW-0547">Nucleotide-binding</keyword>
<keyword id="KW-0630">Potassium</keyword>
<keyword id="KW-1185">Reference proteome</keyword>
<keyword id="KW-0808">Transferase</keyword>
<feature type="chain" id="PRO_1000085859" description="Type III pantothenate kinase">
    <location>
        <begin position="1"/>
        <end position="255"/>
    </location>
</feature>
<feature type="active site" description="Proton acceptor" evidence="1">
    <location>
        <position position="109"/>
    </location>
</feature>
<feature type="binding site" evidence="1">
    <location>
        <begin position="6"/>
        <end position="13"/>
    </location>
    <ligand>
        <name>ATP</name>
        <dbReference type="ChEBI" id="CHEBI:30616"/>
    </ligand>
</feature>
<feature type="binding site" evidence="1">
    <location>
        <begin position="107"/>
        <end position="110"/>
    </location>
    <ligand>
        <name>substrate</name>
    </ligand>
</feature>
<feature type="binding site" evidence="1">
    <location>
        <position position="132"/>
    </location>
    <ligand>
        <name>ATP</name>
        <dbReference type="ChEBI" id="CHEBI:30616"/>
    </ligand>
</feature>
<feature type="binding site" evidence="1">
    <location>
        <position position="184"/>
    </location>
    <ligand>
        <name>substrate</name>
    </ligand>
</feature>
<dbReference type="EC" id="2.7.1.33" evidence="1"/>
<dbReference type="EMBL" id="CP000804">
    <property type="protein sequence ID" value="ABU57393.1"/>
    <property type="molecule type" value="Genomic_DNA"/>
</dbReference>
<dbReference type="RefSeq" id="WP_012119823.1">
    <property type="nucleotide sequence ID" value="NC_009767.1"/>
</dbReference>
<dbReference type="SMR" id="A7NF27"/>
<dbReference type="STRING" id="383372.Rcas_1296"/>
<dbReference type="KEGG" id="rca:Rcas_1296"/>
<dbReference type="eggNOG" id="COG1521">
    <property type="taxonomic scope" value="Bacteria"/>
</dbReference>
<dbReference type="HOGENOM" id="CLU_066627_1_0_0"/>
<dbReference type="OrthoDB" id="9804707at2"/>
<dbReference type="UniPathway" id="UPA00241">
    <property type="reaction ID" value="UER00352"/>
</dbReference>
<dbReference type="Proteomes" id="UP000000263">
    <property type="component" value="Chromosome"/>
</dbReference>
<dbReference type="GO" id="GO:0005737">
    <property type="term" value="C:cytoplasm"/>
    <property type="evidence" value="ECO:0007669"/>
    <property type="project" value="UniProtKB-SubCell"/>
</dbReference>
<dbReference type="GO" id="GO:0005524">
    <property type="term" value="F:ATP binding"/>
    <property type="evidence" value="ECO:0007669"/>
    <property type="project" value="UniProtKB-UniRule"/>
</dbReference>
<dbReference type="GO" id="GO:0004594">
    <property type="term" value="F:pantothenate kinase activity"/>
    <property type="evidence" value="ECO:0007669"/>
    <property type="project" value="UniProtKB-UniRule"/>
</dbReference>
<dbReference type="GO" id="GO:0015937">
    <property type="term" value="P:coenzyme A biosynthetic process"/>
    <property type="evidence" value="ECO:0007669"/>
    <property type="project" value="UniProtKB-UniRule"/>
</dbReference>
<dbReference type="CDD" id="cd24015">
    <property type="entry name" value="ASKHA_NBD_PanK-III"/>
    <property type="match status" value="1"/>
</dbReference>
<dbReference type="Gene3D" id="3.30.420.40">
    <property type="match status" value="2"/>
</dbReference>
<dbReference type="HAMAP" id="MF_01274">
    <property type="entry name" value="Pantothen_kinase_3"/>
    <property type="match status" value="1"/>
</dbReference>
<dbReference type="InterPro" id="IPR043129">
    <property type="entry name" value="ATPase_NBD"/>
</dbReference>
<dbReference type="InterPro" id="IPR004619">
    <property type="entry name" value="Type_III_PanK"/>
</dbReference>
<dbReference type="NCBIfam" id="TIGR00671">
    <property type="entry name" value="baf"/>
    <property type="match status" value="1"/>
</dbReference>
<dbReference type="NCBIfam" id="NF009848">
    <property type="entry name" value="PRK13318.1-6"/>
    <property type="match status" value="1"/>
</dbReference>
<dbReference type="NCBIfam" id="NF009855">
    <property type="entry name" value="PRK13321.1"/>
    <property type="match status" value="1"/>
</dbReference>
<dbReference type="PANTHER" id="PTHR34265">
    <property type="entry name" value="TYPE III PANTOTHENATE KINASE"/>
    <property type="match status" value="1"/>
</dbReference>
<dbReference type="PANTHER" id="PTHR34265:SF1">
    <property type="entry name" value="TYPE III PANTOTHENATE KINASE"/>
    <property type="match status" value="1"/>
</dbReference>
<dbReference type="Pfam" id="PF03309">
    <property type="entry name" value="Pan_kinase"/>
    <property type="match status" value="1"/>
</dbReference>
<dbReference type="SUPFAM" id="SSF53067">
    <property type="entry name" value="Actin-like ATPase domain"/>
    <property type="match status" value="2"/>
</dbReference>
<evidence type="ECO:0000255" key="1">
    <source>
        <dbReference type="HAMAP-Rule" id="MF_01274"/>
    </source>
</evidence>
<name>COAX_ROSCS</name>